<name>AARE2_ORYSJ</name>
<proteinExistence type="inferred from homology"/>
<protein>
    <recommendedName>
        <fullName evidence="3">Acylamino-acid-releasing enzyme 2</fullName>
        <shortName evidence="3">AARE2</shortName>
        <ecNumber evidence="3">3.4.19.1</ecNumber>
    </recommendedName>
</protein>
<sequence>MDALASEEYASQSKLLQEFTNAPSIDGAWVFQTNNEDRSTAMYSISQTNLLANNKRKYILFSHIMRNGTNLLDFQWSPFPIQMDGVSAVVPSPSGSKLLVVRNGEKGSPTKLEIVDQSHVEKEIHVAQSVHGPLYTDEWFHGISWNQEETLIAYIAEDSPEPKPVFDDTGYRKEGSSEKDCNNWKGQGDWEEDWGETYSKKGRPSLFVLDINSGEVRAAKGISRSLSVGQVVWAPPSSCGRQKYLIFVGWLEHNGFQNTPRKLGIKYCSNRPCSLYSTLCPFEESDVDNAPASDSKLEPASVAINLTPSISSAFFPRFSKDGKLLVFLSANRAVDSGAHNATDSLHKINWPSDWKMDQYLEITDVIPIVMCPQDGCFPGLYCSSMLSNPWLSDRCTMILTSAWRSTEVILSIDVLSGKATRISPENSEYSWSALAVDGHNVLAVSSSPIDPPQIKYGHQVSLKDQTCTWVWDEVNNNPLMAANNKVKALLSHHQFSILKIPVTNPSDDLSDGSKLPFEAIFVSCKDSSHKPTILVLHGGPHSVSVSSYSKTSAFLASLGFNLLIVNYRGTPGFGEEALQSLPGKVGSQDVQDCLTALDYVIEGGLIDASKVAVIGISHGGFLTTHLIGQAPDRFMVAAARNPVCNLSLMIGTTDIPDWCYAVACGSEGRQHASESPSPDHLRLFYQKSPIAHISKVKAPLLMLLGGADLRVPISNGLQYARALRERGGEIRIMMFPDDIHEINIPQSDFESFLNIGVWFKKHLSISASDASA</sequence>
<feature type="chain" id="PRO_0000435687" description="Acylamino-acid-releasing enzyme 2">
    <location>
        <begin position="1"/>
        <end position="772"/>
    </location>
</feature>
<feature type="active site" description="Charge relay system" evidence="2">
    <location>
        <position position="617"/>
    </location>
</feature>
<feature type="active site" description="Charge relay system" evidence="2">
    <location>
        <position position="708"/>
    </location>
</feature>
<feature type="active site" description="Charge relay system" evidence="2">
    <location>
        <position position="740"/>
    </location>
</feature>
<organism>
    <name type="scientific">Oryza sativa subsp. japonica</name>
    <name type="common">Rice</name>
    <dbReference type="NCBI Taxonomy" id="39947"/>
    <lineage>
        <taxon>Eukaryota</taxon>
        <taxon>Viridiplantae</taxon>
        <taxon>Streptophyta</taxon>
        <taxon>Embryophyta</taxon>
        <taxon>Tracheophyta</taxon>
        <taxon>Spermatophyta</taxon>
        <taxon>Magnoliopsida</taxon>
        <taxon>Liliopsida</taxon>
        <taxon>Poales</taxon>
        <taxon>Poaceae</taxon>
        <taxon>BOP clade</taxon>
        <taxon>Oryzoideae</taxon>
        <taxon>Oryzeae</taxon>
        <taxon>Oryzinae</taxon>
        <taxon>Oryza</taxon>
        <taxon>Oryza sativa</taxon>
    </lineage>
</organism>
<dbReference type="EC" id="3.4.19.1" evidence="3"/>
<dbReference type="EMBL" id="DP000086">
    <property type="protein sequence ID" value="ABB47614.1"/>
    <property type="molecule type" value="Genomic_DNA"/>
</dbReference>
<dbReference type="EMBL" id="AP008216">
    <property type="protein sequence ID" value="BAF26517.1"/>
    <property type="status" value="ALT_INIT"/>
    <property type="molecule type" value="Genomic_DNA"/>
</dbReference>
<dbReference type="EMBL" id="AP014966">
    <property type="protein sequence ID" value="BAT10849.1"/>
    <property type="molecule type" value="Genomic_DNA"/>
</dbReference>
<dbReference type="RefSeq" id="XP_015614200.1">
    <property type="nucleotide sequence ID" value="XM_015758714.1"/>
</dbReference>
<dbReference type="SMR" id="Q338C0"/>
<dbReference type="FunCoup" id="Q338C0">
    <property type="interactions" value="1490"/>
</dbReference>
<dbReference type="STRING" id="39947.Q338C0"/>
<dbReference type="ESTHER" id="orysj-q338c0">
    <property type="family name" value="ACPH_Peptidase_S9"/>
</dbReference>
<dbReference type="MEROPS" id="S09.004"/>
<dbReference type="PaxDb" id="39947-Q338C0"/>
<dbReference type="EnsemblPlants" id="Os10t0415800-01">
    <property type="protein sequence ID" value="Os10t0415800-01"/>
    <property type="gene ID" value="Os10g0415800"/>
</dbReference>
<dbReference type="Gramene" id="Os10t0415800-01">
    <property type="protein sequence ID" value="Os10t0415800-01"/>
    <property type="gene ID" value="Os10g0415800"/>
</dbReference>
<dbReference type="KEGG" id="dosa:Os10g0415800"/>
<dbReference type="eggNOG" id="KOG2100">
    <property type="taxonomic scope" value="Eukaryota"/>
</dbReference>
<dbReference type="HOGENOM" id="CLU_014230_1_1_1"/>
<dbReference type="InParanoid" id="Q338C0"/>
<dbReference type="OMA" id="NLLDFQW"/>
<dbReference type="OrthoDB" id="416344at2759"/>
<dbReference type="Proteomes" id="UP000000763">
    <property type="component" value="Chromosome 10"/>
</dbReference>
<dbReference type="Proteomes" id="UP000059680">
    <property type="component" value="Chromosome 10"/>
</dbReference>
<dbReference type="ExpressionAtlas" id="Q338C0">
    <property type="expression patterns" value="baseline and differential"/>
</dbReference>
<dbReference type="GO" id="GO:0005737">
    <property type="term" value="C:cytoplasm"/>
    <property type="evidence" value="ECO:0007669"/>
    <property type="project" value="UniProtKB-SubCell"/>
</dbReference>
<dbReference type="GO" id="GO:0008242">
    <property type="term" value="F:omega peptidase activity"/>
    <property type="evidence" value="ECO:0007669"/>
    <property type="project" value="UniProtKB-EC"/>
</dbReference>
<dbReference type="GO" id="GO:0004252">
    <property type="term" value="F:serine-type endopeptidase activity"/>
    <property type="evidence" value="ECO:0000318"/>
    <property type="project" value="GO_Central"/>
</dbReference>
<dbReference type="GO" id="GO:0006508">
    <property type="term" value="P:proteolysis"/>
    <property type="evidence" value="ECO:0007669"/>
    <property type="project" value="InterPro"/>
</dbReference>
<dbReference type="FunFam" id="3.40.50.1820:FF:000146">
    <property type="entry name" value="Acylamino-acid-releasing enzyme"/>
    <property type="match status" value="1"/>
</dbReference>
<dbReference type="Gene3D" id="3.40.50.1820">
    <property type="entry name" value="alpha/beta hydrolase"/>
    <property type="match status" value="1"/>
</dbReference>
<dbReference type="InterPro" id="IPR045550">
    <property type="entry name" value="AARE_N"/>
</dbReference>
<dbReference type="InterPro" id="IPR029058">
    <property type="entry name" value="AB_hydrolase_fold"/>
</dbReference>
<dbReference type="InterPro" id="IPR002471">
    <property type="entry name" value="Pept_S9_AS"/>
</dbReference>
<dbReference type="InterPro" id="IPR001375">
    <property type="entry name" value="Peptidase_S9_cat"/>
</dbReference>
<dbReference type="PANTHER" id="PTHR42776:SF18">
    <property type="entry name" value="ACYLAMINO-ACID-RELEASING ENZYME 2"/>
    <property type="match status" value="1"/>
</dbReference>
<dbReference type="PANTHER" id="PTHR42776">
    <property type="entry name" value="SERINE PEPTIDASE S9 FAMILY MEMBER"/>
    <property type="match status" value="1"/>
</dbReference>
<dbReference type="Pfam" id="PF19283">
    <property type="entry name" value="APEH_N"/>
    <property type="match status" value="1"/>
</dbReference>
<dbReference type="Pfam" id="PF00326">
    <property type="entry name" value="Peptidase_S9"/>
    <property type="match status" value="1"/>
</dbReference>
<dbReference type="SUPFAM" id="SSF53474">
    <property type="entry name" value="alpha/beta-Hydrolases"/>
    <property type="match status" value="1"/>
</dbReference>
<dbReference type="SUPFAM" id="SSF82171">
    <property type="entry name" value="DPP6 N-terminal domain-like"/>
    <property type="match status" value="1"/>
</dbReference>
<dbReference type="PROSITE" id="PS00708">
    <property type="entry name" value="PRO_ENDOPEP_SER"/>
    <property type="match status" value="1"/>
</dbReference>
<gene>
    <name evidence="5" type="ordered locus">Os10g0415800</name>
    <name evidence="4" type="ordered locus">LOC_Os10g28030</name>
</gene>
<comment type="function">
    <text evidence="1">Catalyzes the hydrolysis of the N-terminal peptide bond of an N-acetylated peptide to generate an N-acetylated amino acid and a peptide with a free N-terminus.</text>
</comment>
<comment type="catalytic activity">
    <reaction evidence="3">
        <text>Cleavage of an N-acetyl or N-formyl amino acid from the N-terminus of a polypeptide.</text>
        <dbReference type="EC" id="3.4.19.1"/>
    </reaction>
</comment>
<comment type="subunit">
    <text evidence="1">Homotetramer.</text>
</comment>
<comment type="subcellular location">
    <subcellularLocation>
        <location evidence="1">Cytoplasm</location>
    </subcellularLocation>
</comment>
<comment type="similarity">
    <text evidence="3">Belongs to the peptidase S9C family.</text>
</comment>
<comment type="sequence caution" evidence="3">
    <conflict type="erroneous initiation">
        <sequence resource="EMBL-CDS" id="BAF26517"/>
    </conflict>
    <text>Extended N-terminus.</text>
</comment>
<accession>Q338C0</accession>
<accession>Q0IXP8</accession>
<evidence type="ECO:0000250" key="1">
    <source>
        <dbReference type="UniProtKB" id="Q84LM4"/>
    </source>
</evidence>
<evidence type="ECO:0000255" key="2">
    <source>
        <dbReference type="PROSITE-ProRule" id="PRU10084"/>
    </source>
</evidence>
<evidence type="ECO:0000305" key="3"/>
<evidence type="ECO:0000312" key="4">
    <source>
        <dbReference type="EMBL" id="ABB47614.1"/>
    </source>
</evidence>
<evidence type="ECO:0000312" key="5">
    <source>
        <dbReference type="EMBL" id="BAF26517.1"/>
    </source>
</evidence>
<keyword id="KW-0963">Cytoplasm</keyword>
<keyword id="KW-0378">Hydrolase</keyword>
<keyword id="KW-1185">Reference proteome</keyword>
<reference key="1">
    <citation type="journal article" date="2003" name="Science">
        <title>In-depth view of structure, activity, and evolution of rice chromosome 10.</title>
        <authorList>
            <person name="Yu Y."/>
            <person name="Rambo T."/>
            <person name="Currie J."/>
            <person name="Saski C."/>
            <person name="Kim H.-R."/>
            <person name="Collura K."/>
            <person name="Thompson S."/>
            <person name="Simmons J."/>
            <person name="Yang T.-J."/>
            <person name="Nah G."/>
            <person name="Patel A.J."/>
            <person name="Thurmond S."/>
            <person name="Henry D."/>
            <person name="Oates R."/>
            <person name="Palmer M."/>
            <person name="Pries G."/>
            <person name="Gibson J."/>
            <person name="Anderson H."/>
            <person name="Paradkar M."/>
            <person name="Crane L."/>
            <person name="Dale J."/>
            <person name="Carver M.B."/>
            <person name="Wood T."/>
            <person name="Frisch D."/>
            <person name="Engler F."/>
            <person name="Soderlund C."/>
            <person name="Palmer L.E."/>
            <person name="Teytelman L."/>
            <person name="Nascimento L."/>
            <person name="De la Bastide M."/>
            <person name="Spiegel L."/>
            <person name="Ware D."/>
            <person name="O'Shaughnessy A."/>
            <person name="Dike S."/>
            <person name="Dedhia N."/>
            <person name="Preston R."/>
            <person name="Huang E."/>
            <person name="Ferraro K."/>
            <person name="Kuit K."/>
            <person name="Miller B."/>
            <person name="Zutavern T."/>
            <person name="Katzenberger F."/>
            <person name="Muller S."/>
            <person name="Balija V."/>
            <person name="Martienssen R.A."/>
            <person name="Stein L."/>
            <person name="Minx P."/>
            <person name="Johnson D."/>
            <person name="Cordum H."/>
            <person name="Mardis E."/>
            <person name="Cheng Z."/>
            <person name="Jiang J."/>
            <person name="Wilson R."/>
            <person name="McCombie W.R."/>
            <person name="Wing R.A."/>
            <person name="Yuan Q."/>
            <person name="Ouyang S."/>
            <person name="Liu J."/>
            <person name="Jones K.M."/>
            <person name="Gansberger K."/>
            <person name="Moffat K."/>
            <person name="Hill J."/>
            <person name="Tsitrin T."/>
            <person name="Overton L."/>
            <person name="Bera J."/>
            <person name="Kim M."/>
            <person name="Jin S."/>
            <person name="Tallon L."/>
            <person name="Ciecko A."/>
            <person name="Pai G."/>
            <person name="Van Aken S."/>
            <person name="Utterback T."/>
            <person name="Reidmuller S."/>
            <person name="Bormann J."/>
            <person name="Feldblyum T."/>
            <person name="Hsiao J."/>
            <person name="Zismann V."/>
            <person name="Blunt S."/>
            <person name="de Vazeille A.R."/>
            <person name="Shaffer T."/>
            <person name="Koo H."/>
            <person name="Suh B."/>
            <person name="Yang Q."/>
            <person name="Haas B."/>
            <person name="Peterson J."/>
            <person name="Pertea M."/>
            <person name="Volfovsky N."/>
            <person name="Wortman J."/>
            <person name="White O."/>
            <person name="Salzberg S.L."/>
            <person name="Fraser C.M."/>
            <person name="Buell C.R."/>
            <person name="Messing J."/>
            <person name="Song R."/>
            <person name="Fuks G."/>
            <person name="Llaca V."/>
            <person name="Kovchak S."/>
            <person name="Young S."/>
            <person name="Bowers J.E."/>
            <person name="Paterson A.H."/>
            <person name="Johns M.A."/>
            <person name="Mao L."/>
            <person name="Pan H."/>
            <person name="Dean R.A."/>
        </authorList>
    </citation>
    <scope>NUCLEOTIDE SEQUENCE [LARGE SCALE GENOMIC DNA]</scope>
    <source>
        <strain>cv. Nipponbare</strain>
    </source>
</reference>
<reference key="2">
    <citation type="journal article" date="2005" name="Nature">
        <title>The map-based sequence of the rice genome.</title>
        <authorList>
            <consortium name="International rice genome sequencing project (IRGSP)"/>
        </authorList>
    </citation>
    <scope>NUCLEOTIDE SEQUENCE [LARGE SCALE GENOMIC DNA]</scope>
    <source>
        <strain>cv. Nipponbare</strain>
    </source>
</reference>
<reference key="3">
    <citation type="journal article" date="2008" name="Nucleic Acids Res.">
        <title>The rice annotation project database (RAP-DB): 2008 update.</title>
        <authorList>
            <consortium name="The rice annotation project (RAP)"/>
        </authorList>
    </citation>
    <scope>GENOME REANNOTATION</scope>
    <source>
        <strain>cv. Nipponbare</strain>
    </source>
</reference>
<reference key="4">
    <citation type="journal article" date="2013" name="Rice">
        <title>Improvement of the Oryza sativa Nipponbare reference genome using next generation sequence and optical map data.</title>
        <authorList>
            <person name="Kawahara Y."/>
            <person name="de la Bastide M."/>
            <person name="Hamilton J.P."/>
            <person name="Kanamori H."/>
            <person name="McCombie W.R."/>
            <person name="Ouyang S."/>
            <person name="Schwartz D.C."/>
            <person name="Tanaka T."/>
            <person name="Wu J."/>
            <person name="Zhou S."/>
            <person name="Childs K.L."/>
            <person name="Davidson R.M."/>
            <person name="Lin H."/>
            <person name="Quesada-Ocampo L."/>
            <person name="Vaillancourt B."/>
            <person name="Sakai H."/>
            <person name="Lee S.S."/>
            <person name="Kim J."/>
            <person name="Numa H."/>
            <person name="Itoh T."/>
            <person name="Buell C.R."/>
            <person name="Matsumoto T."/>
        </authorList>
    </citation>
    <scope>GENOME REANNOTATION</scope>
    <source>
        <strain>cv. Nipponbare</strain>
    </source>
</reference>